<keyword id="KW-1003">Cell membrane</keyword>
<keyword id="KW-0350">Heme biosynthesis</keyword>
<keyword id="KW-0472">Membrane</keyword>
<keyword id="KW-1185">Reference proteome</keyword>
<keyword id="KW-0808">Transferase</keyword>
<keyword id="KW-0812">Transmembrane</keyword>
<keyword id="KW-1133">Transmembrane helix</keyword>
<name>COXX_METS5</name>
<protein>
    <recommendedName>
        <fullName evidence="1">Protoheme IX farnesyltransferase</fullName>
        <ecNumber evidence="1">2.5.1.141</ecNumber>
    </recommendedName>
    <alternativeName>
        <fullName evidence="1">Heme B farnesyltransferase</fullName>
    </alternativeName>
    <alternativeName>
        <fullName evidence="1">Heme O synthase</fullName>
    </alternativeName>
</protein>
<reference key="1">
    <citation type="journal article" date="2008" name="Appl. Environ. Microbiol.">
        <title>The genome sequence of the metal-mobilizing, extremely thermoacidophilic archaeon Metallosphaera sedula provides insights into bioleaching-associated metabolism.</title>
        <authorList>
            <person name="Auernik K.S."/>
            <person name="Maezato Y."/>
            <person name="Blum P.H."/>
            <person name="Kelly R.M."/>
        </authorList>
    </citation>
    <scope>NUCLEOTIDE SEQUENCE [LARGE SCALE GENOMIC DNA]</scope>
    <source>
        <strain>ATCC 51363 / DSM 5348 / JCM 9185 / NBRC 15509 / TH2</strain>
    </source>
</reference>
<feature type="chain" id="PRO_0000346088" description="Protoheme IX farnesyltransferase">
    <location>
        <begin position="1"/>
        <end position="285"/>
    </location>
</feature>
<feature type="transmembrane region" description="Helical" evidence="1">
    <location>
        <begin position="19"/>
        <end position="39"/>
    </location>
</feature>
<feature type="transmembrane region" description="Helical" evidence="1">
    <location>
        <begin position="40"/>
        <end position="60"/>
    </location>
</feature>
<feature type="transmembrane region" description="Helical" evidence="1">
    <location>
        <begin position="90"/>
        <end position="110"/>
    </location>
</feature>
<feature type="transmembrane region" description="Helical" evidence="1">
    <location>
        <begin position="111"/>
        <end position="131"/>
    </location>
</feature>
<feature type="transmembrane region" description="Helical" evidence="1">
    <location>
        <begin position="135"/>
        <end position="155"/>
    </location>
</feature>
<feature type="transmembrane region" description="Helical" evidence="1">
    <location>
        <begin position="165"/>
        <end position="185"/>
    </location>
</feature>
<feature type="transmembrane region" description="Helical" evidence="1">
    <location>
        <begin position="220"/>
        <end position="240"/>
    </location>
</feature>
<feature type="transmembrane region" description="Helical" evidence="1">
    <location>
        <begin position="265"/>
        <end position="285"/>
    </location>
</feature>
<sequence>MATSISARLIYYAKLSKPRIIWLLDLAALSGAFLSGKLMPLSILAVLVGGTFASAGSMIINEGIEIDKDKVMKRTSKRPTVMGYVSQKEAIYVGIALLTLGTLVGLLDNPLTSFFILLGGLVYVLVYTVWLKPRSPLNIVIGGLAGSAAAWAGYASTTSSFTIPSILLGLLIFMWTPGHFWALALKFKEDYSRAGIPMLPVIMPENFSAKMIALSNALMIPFALALYLYAGVIYGIVAGILSAVQMYFSVRLMRNPTGEEAWRSFKFSSPYLAILLILIILTRLI</sequence>
<organism>
    <name type="scientific">Metallosphaera sedula (strain ATCC 51363 / DSM 5348 / JCM 9185 / NBRC 15509 / TH2)</name>
    <dbReference type="NCBI Taxonomy" id="399549"/>
    <lineage>
        <taxon>Archaea</taxon>
        <taxon>Thermoproteota</taxon>
        <taxon>Thermoprotei</taxon>
        <taxon>Sulfolobales</taxon>
        <taxon>Sulfolobaceae</taxon>
        <taxon>Metallosphaera</taxon>
    </lineage>
</organism>
<evidence type="ECO:0000255" key="1">
    <source>
        <dbReference type="HAMAP-Rule" id="MF_00154"/>
    </source>
</evidence>
<evidence type="ECO:0000305" key="2"/>
<gene>
    <name evidence="1" type="primary">ctaB</name>
    <name type="ordered locus">Msed_2002</name>
</gene>
<proteinExistence type="inferred from homology"/>
<comment type="function">
    <text evidence="1">Converts heme B (protoheme IX) to heme O by substitution of the vinyl group on carbon 2 of heme B porphyrin ring with a hydroxyethyl farnesyl side group.</text>
</comment>
<comment type="catalytic activity">
    <reaction evidence="1">
        <text>heme b + (2E,6E)-farnesyl diphosphate + H2O = Fe(II)-heme o + diphosphate</text>
        <dbReference type="Rhea" id="RHEA:28070"/>
        <dbReference type="ChEBI" id="CHEBI:15377"/>
        <dbReference type="ChEBI" id="CHEBI:33019"/>
        <dbReference type="ChEBI" id="CHEBI:60344"/>
        <dbReference type="ChEBI" id="CHEBI:60530"/>
        <dbReference type="ChEBI" id="CHEBI:175763"/>
        <dbReference type="EC" id="2.5.1.141"/>
    </reaction>
</comment>
<comment type="pathway">
    <text evidence="1">Porphyrin-containing compound metabolism; heme O biosynthesis; heme O from protoheme: step 1/1.</text>
</comment>
<comment type="subcellular location">
    <subcellularLocation>
        <location evidence="1">Cell membrane</location>
        <topology evidence="1">Multi-pass membrane protein</topology>
    </subcellularLocation>
</comment>
<comment type="miscellaneous">
    <text evidence="1">Carbon 2 of the heme B porphyrin ring is defined according to the Fischer nomenclature.</text>
</comment>
<comment type="similarity">
    <text evidence="1">Belongs to the UbiA prenyltransferase family. Protoheme IX farnesyltransferase subfamily.</text>
</comment>
<comment type="sequence caution" evidence="2">
    <conflict type="erroneous initiation">
        <sequence resource="EMBL-CDS" id="ABP96142"/>
    </conflict>
</comment>
<dbReference type="EC" id="2.5.1.141" evidence="1"/>
<dbReference type="EMBL" id="CP000682">
    <property type="protein sequence ID" value="ABP96142.1"/>
    <property type="status" value="ALT_INIT"/>
    <property type="molecule type" value="Genomic_DNA"/>
</dbReference>
<dbReference type="RefSeq" id="WP_187146784.1">
    <property type="nucleotide sequence ID" value="NC_009440.1"/>
</dbReference>
<dbReference type="SMR" id="A4YI90"/>
<dbReference type="STRING" id="399549.Msed_2002"/>
<dbReference type="GeneID" id="91756535"/>
<dbReference type="KEGG" id="mse:Msed_2002"/>
<dbReference type="eggNOG" id="arCOG00479">
    <property type="taxonomic scope" value="Archaea"/>
</dbReference>
<dbReference type="HOGENOM" id="CLU_029631_0_1_2"/>
<dbReference type="UniPathway" id="UPA00834">
    <property type="reaction ID" value="UER00712"/>
</dbReference>
<dbReference type="Proteomes" id="UP000000242">
    <property type="component" value="Chromosome"/>
</dbReference>
<dbReference type="GO" id="GO:0005886">
    <property type="term" value="C:plasma membrane"/>
    <property type="evidence" value="ECO:0007669"/>
    <property type="project" value="UniProtKB-SubCell"/>
</dbReference>
<dbReference type="GO" id="GO:0008495">
    <property type="term" value="F:protoheme IX farnesyltransferase activity"/>
    <property type="evidence" value="ECO:0007669"/>
    <property type="project" value="UniProtKB-UniRule"/>
</dbReference>
<dbReference type="GO" id="GO:0048034">
    <property type="term" value="P:heme O biosynthetic process"/>
    <property type="evidence" value="ECO:0007669"/>
    <property type="project" value="UniProtKB-UniRule"/>
</dbReference>
<dbReference type="CDD" id="cd13957">
    <property type="entry name" value="PT_UbiA_Cox10"/>
    <property type="match status" value="1"/>
</dbReference>
<dbReference type="Gene3D" id="1.10.357.140">
    <property type="entry name" value="UbiA prenyltransferase"/>
    <property type="match status" value="1"/>
</dbReference>
<dbReference type="HAMAP" id="MF_00154">
    <property type="entry name" value="CyoE_CtaB"/>
    <property type="match status" value="1"/>
</dbReference>
<dbReference type="InterPro" id="IPR006369">
    <property type="entry name" value="Protohaem_IX_farnesylTrfase"/>
</dbReference>
<dbReference type="InterPro" id="IPR000537">
    <property type="entry name" value="UbiA_prenyltransferase"/>
</dbReference>
<dbReference type="InterPro" id="IPR044878">
    <property type="entry name" value="UbiA_sf"/>
</dbReference>
<dbReference type="NCBIfam" id="TIGR01473">
    <property type="entry name" value="cyoE_ctaB"/>
    <property type="match status" value="1"/>
</dbReference>
<dbReference type="PANTHER" id="PTHR43448">
    <property type="entry name" value="PROTOHEME IX FARNESYLTRANSFERASE, MITOCHONDRIAL"/>
    <property type="match status" value="1"/>
</dbReference>
<dbReference type="PANTHER" id="PTHR43448:SF2">
    <property type="entry name" value="PROTOHEME IX FARNESYLTRANSFERASE, MITOCHONDRIAL"/>
    <property type="match status" value="1"/>
</dbReference>
<dbReference type="Pfam" id="PF01040">
    <property type="entry name" value="UbiA"/>
    <property type="match status" value="1"/>
</dbReference>
<accession>A4YI90</accession>